<proteinExistence type="inferred from homology"/>
<evidence type="ECO:0000255" key="1">
    <source>
        <dbReference type="HAMAP-Rule" id="MF_03104"/>
    </source>
</evidence>
<gene>
    <name evidence="1" type="primary">MDM12</name>
    <name type="ORF">POSPLDRAFT_90856</name>
</gene>
<reference key="1">
    <citation type="journal article" date="2009" name="Proc. Natl. Acad. Sci. U.S.A.">
        <title>Genome, transcriptome, and secretome analysis of wood decay fungus Postia placenta supports unique mechanisms of lignocellulose conversion.</title>
        <authorList>
            <person name="Martinez D."/>
            <person name="Challacombe J."/>
            <person name="Morgenstern I."/>
            <person name="Hibbett D."/>
            <person name="Schmoll M."/>
            <person name="Kubicek C.P."/>
            <person name="Ferreira P."/>
            <person name="Ruiz-Duenas F.J."/>
            <person name="Martinez A.T."/>
            <person name="Kersten P."/>
            <person name="Hammel K.E."/>
            <person name="Vanden Wymelenberg A."/>
            <person name="Gaskell J."/>
            <person name="Lindquist E."/>
            <person name="Sabat G."/>
            <person name="Splinter BonDurant S."/>
            <person name="Larrondo L.F."/>
            <person name="Canessa P."/>
            <person name="Vicuna R."/>
            <person name="Yadav J."/>
            <person name="Doddapaneni H."/>
            <person name="Subramanian V."/>
            <person name="Pisabarro A.G."/>
            <person name="Lavin J.L."/>
            <person name="Oguiza J.A."/>
            <person name="Master E."/>
            <person name="Henrissat B."/>
            <person name="Coutinho P.M."/>
            <person name="Harris P."/>
            <person name="Magnuson J.K."/>
            <person name="Baker S.E."/>
            <person name="Bruno K."/>
            <person name="Kenealy W."/>
            <person name="Hoegger P.J."/>
            <person name="Kuees U."/>
            <person name="Ramaiya P."/>
            <person name="Lucas S."/>
            <person name="Salamov A."/>
            <person name="Shapiro H."/>
            <person name="Tu H."/>
            <person name="Chee C.L."/>
            <person name="Misra M."/>
            <person name="Xie G."/>
            <person name="Teter S."/>
            <person name="Yaver D."/>
            <person name="James T."/>
            <person name="Mokrejs M."/>
            <person name="Pospisek M."/>
            <person name="Grigoriev I.V."/>
            <person name="Brettin T."/>
            <person name="Rokhsar D."/>
            <person name="Berka R."/>
            <person name="Cullen D."/>
        </authorList>
    </citation>
    <scope>NUCLEOTIDE SEQUENCE [LARGE SCALE GENOMIC DNA]</scope>
    <source>
        <strain>ATCC 44394 / Madison 698-R</strain>
    </source>
</reference>
<organism>
    <name type="scientific">Postia placenta (strain ATCC 44394 / Madison 698-R)</name>
    <name type="common">Brown rot fungus</name>
    <name type="synonym">Poria monticola</name>
    <dbReference type="NCBI Taxonomy" id="561896"/>
    <lineage>
        <taxon>Eukaryota</taxon>
        <taxon>Fungi</taxon>
        <taxon>Dikarya</taxon>
        <taxon>Basidiomycota</taxon>
        <taxon>Agaricomycotina</taxon>
        <taxon>Agaricomycetes</taxon>
        <taxon>Polyporales</taxon>
        <taxon>Adustoporiaceae</taxon>
        <taxon>Rhodonia</taxon>
    </lineage>
</organism>
<name>MDM12_POSPM</name>
<accession>B8P9E4</accession>
<feature type="chain" id="PRO_0000384307" description="Mitochondrial distribution and morphology protein 12">
    <location>
        <begin position="1"/>
        <end position="316"/>
    </location>
</feature>
<feature type="domain" description="SMP-LTD" evidence="1">
    <location>
        <begin position="1"/>
        <end position="312"/>
    </location>
</feature>
<comment type="function">
    <text evidence="1">Component of the ERMES/MDM complex, which serves as a molecular tether to connect the endoplasmic reticulum (ER) and mitochondria. Components of this complex are involved in the control of mitochondrial shape and protein biogenesis, and function in nonvesicular lipid trafficking between the ER and mitochondria. MDM12 is required for the interaction of the ER-resident membrane protein MMM1 and the outer mitochondrial membrane-resident beta-barrel protein MDM10. The MDM12-MMM1 subcomplex functions in the major beta-barrel assembly pathway that is responsible for biogenesis of all mitochondrial outer membrane beta-barrel proteins, and acts in a late step after the SAM complex. The MDM10-MDM12-MMM1 subcomplex further acts in the TOM40-specific pathway after the action of the MDM12-MMM1 complex. Essential for establishing and maintaining the structure of mitochondria and maintenance of mtDNA nucleoids.</text>
</comment>
<comment type="subunit">
    <text evidence="1">Component of the ER-mitochondria encounter structure (ERMES) or MDM complex, composed of MMM1, MDM10, MDM12 and MDM34. A MMM1 homodimer associates with one molecule of MDM12 on each side in a pairwise head-to-tail manner, and the SMP-LTD domains of MMM1 and MDM12 generate a continuous hydrophobic tunnel for phospholipid trafficking.</text>
</comment>
<comment type="subcellular location">
    <subcellularLocation>
        <location evidence="1">Mitochondrion outer membrane</location>
        <topology evidence="1">Peripheral membrane protein</topology>
        <orientation evidence="1">Cytoplasmic side</orientation>
    </subcellularLocation>
    <subcellularLocation>
        <location evidence="1">Endoplasmic reticulum membrane</location>
        <topology evidence="1">Peripheral membrane protein</topology>
        <orientation evidence="1">Cytoplasmic side</orientation>
    </subcellularLocation>
    <text evidence="1">The ERMES/MDM complex localizes to a few discrete foci (around 10 per single cell), that represent mitochondria-endoplasmic reticulum junctions. These foci are often found next to mtDNA nucleoids.</text>
</comment>
<comment type="domain">
    <text evidence="1">The SMP-LTD domain is a barrel-like domain that can bind various types of glycerophospholipids in its interior and mediate their transfer between two adjacent bilayers.</text>
</comment>
<comment type="similarity">
    <text evidence="1">Belongs to the MDM12 family.</text>
</comment>
<dbReference type="EMBL" id="EQ966286">
    <property type="protein sequence ID" value="EED82486.1"/>
    <property type="molecule type" value="Genomic_DNA"/>
</dbReference>
<dbReference type="RefSeq" id="XP_002472318.1">
    <property type="nucleotide sequence ID" value="XM_002472273.1"/>
</dbReference>
<dbReference type="SMR" id="B8P9E4"/>
<dbReference type="FunCoup" id="B8P9E4">
    <property type="interactions" value="20"/>
</dbReference>
<dbReference type="KEGG" id="ppl:POSPLDRAFT_90856"/>
<dbReference type="HOGENOM" id="CLU_026794_1_0_1"/>
<dbReference type="InParanoid" id="B8P9E4"/>
<dbReference type="OMA" id="AAWPSWI"/>
<dbReference type="OrthoDB" id="3356905at2759"/>
<dbReference type="GO" id="GO:0005789">
    <property type="term" value="C:endoplasmic reticulum membrane"/>
    <property type="evidence" value="ECO:0007669"/>
    <property type="project" value="UniProtKB-SubCell"/>
</dbReference>
<dbReference type="GO" id="GO:0032865">
    <property type="term" value="C:ERMES complex"/>
    <property type="evidence" value="ECO:0007669"/>
    <property type="project" value="UniProtKB-UniRule"/>
</dbReference>
<dbReference type="GO" id="GO:0008289">
    <property type="term" value="F:lipid binding"/>
    <property type="evidence" value="ECO:0007669"/>
    <property type="project" value="UniProtKB-KW"/>
</dbReference>
<dbReference type="GO" id="GO:0000002">
    <property type="term" value="P:mitochondrial genome maintenance"/>
    <property type="evidence" value="ECO:0007669"/>
    <property type="project" value="UniProtKB-UniRule"/>
</dbReference>
<dbReference type="GO" id="GO:1990456">
    <property type="term" value="P:mitochondrion-endoplasmic reticulum membrane tethering"/>
    <property type="evidence" value="ECO:0007669"/>
    <property type="project" value="TreeGrafter"/>
</dbReference>
<dbReference type="GO" id="GO:0015914">
    <property type="term" value="P:phospholipid transport"/>
    <property type="evidence" value="ECO:0007669"/>
    <property type="project" value="TreeGrafter"/>
</dbReference>
<dbReference type="GO" id="GO:0045040">
    <property type="term" value="P:protein insertion into mitochondrial outer membrane"/>
    <property type="evidence" value="ECO:0007669"/>
    <property type="project" value="UniProtKB-UniRule"/>
</dbReference>
<dbReference type="CDD" id="cd21672">
    <property type="entry name" value="SMP_Mdm12"/>
    <property type="match status" value="1"/>
</dbReference>
<dbReference type="HAMAP" id="MF_03104">
    <property type="entry name" value="Mdm12"/>
    <property type="match status" value="1"/>
</dbReference>
<dbReference type="InterPro" id="IPR027532">
    <property type="entry name" value="Mdm12"/>
</dbReference>
<dbReference type="InterPro" id="IPR019411">
    <property type="entry name" value="MMM1_dom"/>
</dbReference>
<dbReference type="InterPro" id="IPR031468">
    <property type="entry name" value="SMP_LBD"/>
</dbReference>
<dbReference type="PANTHER" id="PTHR28204">
    <property type="entry name" value="MITOCHONDRIAL DISTRIBUTION AND MORPHOLOGY PROTEIN 12"/>
    <property type="match status" value="1"/>
</dbReference>
<dbReference type="PANTHER" id="PTHR28204:SF1">
    <property type="entry name" value="MITOCHONDRIAL DISTRIBUTION AND MORPHOLOGY PROTEIN 12"/>
    <property type="match status" value="1"/>
</dbReference>
<dbReference type="Pfam" id="PF10296">
    <property type="entry name" value="MMM1"/>
    <property type="match status" value="1"/>
</dbReference>
<dbReference type="PROSITE" id="PS51847">
    <property type="entry name" value="SMP"/>
    <property type="match status" value="1"/>
</dbReference>
<protein>
    <recommendedName>
        <fullName evidence="1">Mitochondrial distribution and morphology protein 12</fullName>
    </recommendedName>
    <alternativeName>
        <fullName evidence="1">Mitochondrial inheritance component MDM12</fullName>
    </alternativeName>
</protein>
<keyword id="KW-0256">Endoplasmic reticulum</keyword>
<keyword id="KW-0445">Lipid transport</keyword>
<keyword id="KW-0446">Lipid-binding</keyword>
<keyword id="KW-0472">Membrane</keyword>
<keyword id="KW-0496">Mitochondrion</keyword>
<keyword id="KW-1000">Mitochondrion outer membrane</keyword>
<keyword id="KW-0813">Transport</keyword>
<sequence length="316" mass="35503">MSIDLEWNGLDSSLASSLIDALNRQLSSTSRPSFIGPIEVTSFDFGSVSPDIELVDLRDIYRDFLEDDEDAEDVEKEAVKESQWTDEEDDFEWISRKAVRGKGLPQDVPAYHLLPPHMRYGRGVPMDMFASTPSLRPTRDIVSVTFPLRVRNGSRPPHQPDGQEPNPHPNLQLHLHITWNSNLRLTLTTSLLINYPSPMFMSLPIKLSVTGLLFNGEVVVAYEGERRRVHFETPPEADEDMPAAAAGTARAGKPLPIGQRLLPSIYIESEIGQADKHVLKNVTRVERFIQDVIRKTIEEELVFPNFHTLVLGDSGS</sequence>